<organism>
    <name type="scientific">Rickettsia canadensis (strain McKiel)</name>
    <dbReference type="NCBI Taxonomy" id="293613"/>
    <lineage>
        <taxon>Bacteria</taxon>
        <taxon>Pseudomonadati</taxon>
        <taxon>Pseudomonadota</taxon>
        <taxon>Alphaproteobacteria</taxon>
        <taxon>Rickettsiales</taxon>
        <taxon>Rickettsiaceae</taxon>
        <taxon>Rickettsieae</taxon>
        <taxon>Rickettsia</taxon>
        <taxon>belli group</taxon>
    </lineage>
</organism>
<proteinExistence type="inferred from homology"/>
<accession>O33520</accession>
<accession>A8EXV3</accession>
<gene>
    <name evidence="1" type="primary">fmt</name>
    <name type="ordered locus">A1E_01205</name>
</gene>
<evidence type="ECO:0000255" key="1">
    <source>
        <dbReference type="HAMAP-Rule" id="MF_00182"/>
    </source>
</evidence>
<evidence type="ECO:0000305" key="2"/>
<keyword id="KW-0648">Protein biosynthesis</keyword>
<keyword id="KW-0808">Transferase</keyword>
<protein>
    <recommendedName>
        <fullName evidence="1">Methionyl-tRNA formyltransferase</fullName>
        <ecNumber evidence="1">2.1.2.9</ecNumber>
    </recommendedName>
</protein>
<sequence>MKVIFMGTPEFAVPTLKKLIAHHEVTAVFTQQPKAKGRGLSLAQSPIHQLACEHQIPVYTPSTLRNDKTINLINKVNADIIVVIAYGFIVPKAILDAKKYGCLNIHPSDLPRHRGAAPLQRTIIEGDKTSSVCIMRMDTGLDTGDILMKEDFDLEERTTLKELHNKCANLGAELLINTLVNIDNIVPIKQSSDGITYAHKLTKQEGKINWQDSAYSIDCKIRGMNPWPGVYFSYDDKIIKILEAEYLNVDHHFTPGTVISDKLEIACGSGILQVKKLQQESKKALNIEEFLLGTRILKATVLK</sequence>
<dbReference type="EC" id="2.1.2.9" evidence="1"/>
<dbReference type="EMBL" id="CP000409">
    <property type="protein sequence ID" value="ABV73186.1"/>
    <property type="molecule type" value="Genomic_DNA"/>
</dbReference>
<dbReference type="EMBL" id="Y13132">
    <property type="protein sequence ID" value="CAA73599.1"/>
    <property type="molecule type" value="Genomic_DNA"/>
</dbReference>
<dbReference type="RefSeq" id="WP_012148386.1">
    <property type="nucleotide sequence ID" value="NC_009879.1"/>
</dbReference>
<dbReference type="SMR" id="O33520"/>
<dbReference type="STRING" id="293613.A1E_01205"/>
<dbReference type="KEGG" id="rcm:A1E_01205"/>
<dbReference type="eggNOG" id="COG0223">
    <property type="taxonomic scope" value="Bacteria"/>
</dbReference>
<dbReference type="HOGENOM" id="CLU_033347_1_1_5"/>
<dbReference type="Proteomes" id="UP000007056">
    <property type="component" value="Chromosome"/>
</dbReference>
<dbReference type="GO" id="GO:0005829">
    <property type="term" value="C:cytosol"/>
    <property type="evidence" value="ECO:0007669"/>
    <property type="project" value="TreeGrafter"/>
</dbReference>
<dbReference type="GO" id="GO:0004479">
    <property type="term" value="F:methionyl-tRNA formyltransferase activity"/>
    <property type="evidence" value="ECO:0007669"/>
    <property type="project" value="UniProtKB-UniRule"/>
</dbReference>
<dbReference type="CDD" id="cd08646">
    <property type="entry name" value="FMT_core_Met-tRNA-FMT_N"/>
    <property type="match status" value="1"/>
</dbReference>
<dbReference type="CDD" id="cd08704">
    <property type="entry name" value="Met_tRNA_FMT_C"/>
    <property type="match status" value="1"/>
</dbReference>
<dbReference type="Gene3D" id="3.40.50.12230">
    <property type="match status" value="1"/>
</dbReference>
<dbReference type="HAMAP" id="MF_00182">
    <property type="entry name" value="Formyl_trans"/>
    <property type="match status" value="1"/>
</dbReference>
<dbReference type="InterPro" id="IPR005794">
    <property type="entry name" value="Fmt"/>
</dbReference>
<dbReference type="InterPro" id="IPR005793">
    <property type="entry name" value="Formyl_trans_C"/>
</dbReference>
<dbReference type="InterPro" id="IPR002376">
    <property type="entry name" value="Formyl_transf_N"/>
</dbReference>
<dbReference type="InterPro" id="IPR036477">
    <property type="entry name" value="Formyl_transf_N_sf"/>
</dbReference>
<dbReference type="InterPro" id="IPR011034">
    <property type="entry name" value="Formyl_transferase-like_C_sf"/>
</dbReference>
<dbReference type="InterPro" id="IPR044135">
    <property type="entry name" value="Met-tRNA-FMT_C"/>
</dbReference>
<dbReference type="InterPro" id="IPR041711">
    <property type="entry name" value="Met-tRNA-FMT_N"/>
</dbReference>
<dbReference type="NCBIfam" id="TIGR00460">
    <property type="entry name" value="fmt"/>
    <property type="match status" value="1"/>
</dbReference>
<dbReference type="PANTHER" id="PTHR11138">
    <property type="entry name" value="METHIONYL-TRNA FORMYLTRANSFERASE"/>
    <property type="match status" value="1"/>
</dbReference>
<dbReference type="PANTHER" id="PTHR11138:SF5">
    <property type="entry name" value="METHIONYL-TRNA FORMYLTRANSFERASE, MITOCHONDRIAL"/>
    <property type="match status" value="1"/>
</dbReference>
<dbReference type="Pfam" id="PF02911">
    <property type="entry name" value="Formyl_trans_C"/>
    <property type="match status" value="1"/>
</dbReference>
<dbReference type="Pfam" id="PF00551">
    <property type="entry name" value="Formyl_trans_N"/>
    <property type="match status" value="1"/>
</dbReference>
<dbReference type="SUPFAM" id="SSF50486">
    <property type="entry name" value="FMT C-terminal domain-like"/>
    <property type="match status" value="1"/>
</dbReference>
<dbReference type="SUPFAM" id="SSF53328">
    <property type="entry name" value="Formyltransferase"/>
    <property type="match status" value="1"/>
</dbReference>
<feature type="chain" id="PRO_0000083028" description="Methionyl-tRNA formyltransferase">
    <location>
        <begin position="1"/>
        <end position="303"/>
    </location>
</feature>
<feature type="binding site" evidence="1">
    <location>
        <begin position="108"/>
        <end position="111"/>
    </location>
    <ligand>
        <name>(6S)-5,6,7,8-tetrahydrofolate</name>
        <dbReference type="ChEBI" id="CHEBI:57453"/>
    </ligand>
</feature>
<comment type="function">
    <text evidence="1">Attaches a formyl group to the free amino group of methionyl-tRNA(fMet). The formyl group appears to play a dual role in the initiator identity of N-formylmethionyl-tRNA by promoting its recognition by IF2 and preventing the misappropriation of this tRNA by the elongation apparatus.</text>
</comment>
<comment type="catalytic activity">
    <reaction evidence="1">
        <text>L-methionyl-tRNA(fMet) + (6R)-10-formyltetrahydrofolate = N-formyl-L-methionyl-tRNA(fMet) + (6S)-5,6,7,8-tetrahydrofolate + H(+)</text>
        <dbReference type="Rhea" id="RHEA:24380"/>
        <dbReference type="Rhea" id="RHEA-COMP:9952"/>
        <dbReference type="Rhea" id="RHEA-COMP:9953"/>
        <dbReference type="ChEBI" id="CHEBI:15378"/>
        <dbReference type="ChEBI" id="CHEBI:57453"/>
        <dbReference type="ChEBI" id="CHEBI:78530"/>
        <dbReference type="ChEBI" id="CHEBI:78844"/>
        <dbReference type="ChEBI" id="CHEBI:195366"/>
        <dbReference type="EC" id="2.1.2.9"/>
    </reaction>
</comment>
<comment type="similarity">
    <text evidence="1 2">Belongs to the Fmt family.</text>
</comment>
<reference key="1">
    <citation type="submission" date="2007-09" db="EMBL/GenBank/DDBJ databases">
        <title>Complete genome sequence of Rickettsia canadensis.</title>
        <authorList>
            <person name="Madan A."/>
            <person name="Fahey J."/>
            <person name="Helton E."/>
            <person name="Ketteman M."/>
            <person name="Madan A."/>
            <person name="Rodrigues S."/>
            <person name="Sanchez A."/>
            <person name="Whiting M."/>
            <person name="Dasch G."/>
            <person name="Eremeeva M."/>
        </authorList>
    </citation>
    <scope>NUCLEOTIDE SEQUENCE [LARGE SCALE GENOMIC DNA]</scope>
    <source>
        <strain>McKiel</strain>
    </source>
</reference>
<reference key="2">
    <citation type="submission" date="1997-05" db="EMBL/GenBank/DDBJ databases">
        <title>Rearrangement of the rRNA genes in Rickettsia preceeded the divergence of the typhus and the spotted fever group Rickettsia.</title>
        <authorList>
            <person name="Andersson S.G.E."/>
            <person name="Stothard D.R."/>
            <person name="Romedenne M."/>
            <person name="Viseur N."/>
            <person name="Fuerst P."/>
            <person name="Kurland C.G."/>
        </authorList>
    </citation>
    <scope>NUCLEOTIDE SEQUENCE [GENOMIC DNA] OF 231-303</scope>
</reference>
<name>FMT_RICCK</name>